<gene>
    <name type="ordered locus">COXBURSA331_A0772</name>
</gene>
<proteinExistence type="inferred from homology"/>
<evidence type="ECO:0000255" key="1">
    <source>
        <dbReference type="HAMAP-Rule" id="MF_00274"/>
    </source>
</evidence>
<keyword id="KW-0963">Cytoplasm</keyword>
<keyword id="KW-0238">DNA-binding</keyword>
<protein>
    <recommendedName>
        <fullName evidence="1">Nucleoid-associated protein COXBURSA331_A0772</fullName>
    </recommendedName>
</protein>
<accession>A9NCE2</accession>
<feature type="chain" id="PRO_1000078755" description="Nucleoid-associated protein COXBURSA331_A0772">
    <location>
        <begin position="1"/>
        <end position="110"/>
    </location>
</feature>
<comment type="function">
    <text evidence="1">Binds to DNA and alters its conformation. May be involved in regulation of gene expression, nucleoid organization and DNA protection.</text>
</comment>
<comment type="subunit">
    <text evidence="1">Homodimer.</text>
</comment>
<comment type="subcellular location">
    <subcellularLocation>
        <location evidence="1">Cytoplasm</location>
        <location evidence="1">Nucleoid</location>
    </subcellularLocation>
</comment>
<comment type="similarity">
    <text evidence="1">Belongs to the YbaB/EbfC family.</text>
</comment>
<sequence length="110" mass="12103">MIGGKFNLGSLMKNAKKIQEMMQKAQDELAKIRVTGESGAGMVKLTMTAQHEVVEMNLDDELLKESKEVIEDLIKAALNDANQKILKITQEKMMSAGSLFGGNESDNEET</sequence>
<reference key="1">
    <citation type="submission" date="2007-11" db="EMBL/GenBank/DDBJ databases">
        <title>Genome sequencing of phylogenetically and phenotypically diverse Coxiella burnetii isolates.</title>
        <authorList>
            <person name="Seshadri R."/>
            <person name="Samuel J.E."/>
        </authorList>
    </citation>
    <scope>NUCLEOTIDE SEQUENCE [LARGE SCALE GENOMIC DNA]</scope>
    <source>
        <strain>RSA 331 / Henzerling II</strain>
    </source>
</reference>
<organism>
    <name type="scientific">Coxiella burnetii (strain RSA 331 / Henzerling II)</name>
    <dbReference type="NCBI Taxonomy" id="360115"/>
    <lineage>
        <taxon>Bacteria</taxon>
        <taxon>Pseudomonadati</taxon>
        <taxon>Pseudomonadota</taxon>
        <taxon>Gammaproteobacteria</taxon>
        <taxon>Legionellales</taxon>
        <taxon>Coxiellaceae</taxon>
        <taxon>Coxiella</taxon>
    </lineage>
</organism>
<name>Y772_COXBR</name>
<dbReference type="EMBL" id="CP000890">
    <property type="protein sequence ID" value="ABX78256.1"/>
    <property type="molecule type" value="Genomic_DNA"/>
</dbReference>
<dbReference type="RefSeq" id="WP_005771886.1">
    <property type="nucleotide sequence ID" value="NC_010117.1"/>
</dbReference>
<dbReference type="SMR" id="A9NCE2"/>
<dbReference type="KEGG" id="cbs:COXBURSA331_A0772"/>
<dbReference type="HOGENOM" id="CLU_140930_0_0_6"/>
<dbReference type="GO" id="GO:0043590">
    <property type="term" value="C:bacterial nucleoid"/>
    <property type="evidence" value="ECO:0007669"/>
    <property type="project" value="UniProtKB-UniRule"/>
</dbReference>
<dbReference type="GO" id="GO:0005829">
    <property type="term" value="C:cytosol"/>
    <property type="evidence" value="ECO:0007669"/>
    <property type="project" value="TreeGrafter"/>
</dbReference>
<dbReference type="GO" id="GO:0003677">
    <property type="term" value="F:DNA binding"/>
    <property type="evidence" value="ECO:0007669"/>
    <property type="project" value="UniProtKB-UniRule"/>
</dbReference>
<dbReference type="Gene3D" id="3.30.1310.10">
    <property type="entry name" value="Nucleoid-associated protein YbaB-like domain"/>
    <property type="match status" value="1"/>
</dbReference>
<dbReference type="HAMAP" id="MF_00274">
    <property type="entry name" value="DNA_YbaB_EbfC"/>
    <property type="match status" value="1"/>
</dbReference>
<dbReference type="InterPro" id="IPR036894">
    <property type="entry name" value="YbaB-like_sf"/>
</dbReference>
<dbReference type="InterPro" id="IPR004401">
    <property type="entry name" value="YbaB/EbfC"/>
</dbReference>
<dbReference type="NCBIfam" id="TIGR00103">
    <property type="entry name" value="DNA_YbaB_EbfC"/>
    <property type="match status" value="1"/>
</dbReference>
<dbReference type="PANTHER" id="PTHR33449">
    <property type="entry name" value="NUCLEOID-ASSOCIATED PROTEIN YBAB"/>
    <property type="match status" value="1"/>
</dbReference>
<dbReference type="PANTHER" id="PTHR33449:SF1">
    <property type="entry name" value="NUCLEOID-ASSOCIATED PROTEIN YBAB"/>
    <property type="match status" value="1"/>
</dbReference>
<dbReference type="Pfam" id="PF02575">
    <property type="entry name" value="YbaB_DNA_bd"/>
    <property type="match status" value="1"/>
</dbReference>
<dbReference type="PIRSF" id="PIRSF004555">
    <property type="entry name" value="UCP004555"/>
    <property type="match status" value="1"/>
</dbReference>
<dbReference type="SUPFAM" id="SSF82607">
    <property type="entry name" value="YbaB-like"/>
    <property type="match status" value="1"/>
</dbReference>